<organism>
    <name type="scientific">Sus scrofa</name>
    <name type="common">Pig</name>
    <dbReference type="NCBI Taxonomy" id="9823"/>
    <lineage>
        <taxon>Eukaryota</taxon>
        <taxon>Metazoa</taxon>
        <taxon>Chordata</taxon>
        <taxon>Craniata</taxon>
        <taxon>Vertebrata</taxon>
        <taxon>Euteleostomi</taxon>
        <taxon>Mammalia</taxon>
        <taxon>Eutheria</taxon>
        <taxon>Laurasiatheria</taxon>
        <taxon>Artiodactyla</taxon>
        <taxon>Suina</taxon>
        <taxon>Suidae</taxon>
        <taxon>Sus</taxon>
    </lineage>
</organism>
<dbReference type="EC" id="2.7.11.1"/>
<dbReference type="EMBL" id="X78318">
    <property type="protein sequence ID" value="CAA55124.1"/>
    <property type="molecule type" value="Genomic_DNA"/>
</dbReference>
<dbReference type="PIR" id="S43124">
    <property type="entry name" value="S43124"/>
</dbReference>
<dbReference type="RefSeq" id="NP_001106690.1">
    <property type="nucleotide sequence ID" value="NM_001113219.1"/>
</dbReference>
<dbReference type="SMR" id="P50118"/>
<dbReference type="FunCoup" id="P50118">
    <property type="interactions" value="205"/>
</dbReference>
<dbReference type="STRING" id="9823.ENSSSCP00000006661"/>
<dbReference type="PaxDb" id="9823-ENSSSCP00000006661"/>
<dbReference type="Ensembl" id="ENSSSCT00000006847.2">
    <property type="protein sequence ID" value="ENSSSCP00000006661.1"/>
    <property type="gene ID" value="ENSSSCG00000006248.2"/>
</dbReference>
<dbReference type="Ensembl" id="ENSSSCT00015083319.1">
    <property type="protein sequence ID" value="ENSSSCP00015033717.1"/>
    <property type="gene ID" value="ENSSSCG00015062389.1"/>
</dbReference>
<dbReference type="Ensembl" id="ENSSSCT00025029719.1">
    <property type="protein sequence ID" value="ENSSSCP00025012643.1"/>
    <property type="gene ID" value="ENSSSCG00025021845.1"/>
</dbReference>
<dbReference type="Ensembl" id="ENSSSCT00030059487.1">
    <property type="protein sequence ID" value="ENSSSCP00030027229.1"/>
    <property type="gene ID" value="ENSSSCG00030042704.1"/>
</dbReference>
<dbReference type="Ensembl" id="ENSSSCT00035055230.1">
    <property type="protein sequence ID" value="ENSSSCP00035022211.1"/>
    <property type="gene ID" value="ENSSSCG00035041576.1"/>
</dbReference>
<dbReference type="Ensembl" id="ENSSSCT00040031368.1">
    <property type="protein sequence ID" value="ENSSSCP00040013048.1"/>
    <property type="gene ID" value="ENSSSCG00040023423.1"/>
</dbReference>
<dbReference type="Ensembl" id="ENSSSCT00045033223.1">
    <property type="protein sequence ID" value="ENSSSCP00045023027.1"/>
    <property type="gene ID" value="ENSSSCG00045019514.1"/>
</dbReference>
<dbReference type="Ensembl" id="ENSSSCT00055050924.1">
    <property type="protein sequence ID" value="ENSSSCP00055040712.1"/>
    <property type="gene ID" value="ENSSSCG00055025768.1"/>
</dbReference>
<dbReference type="Ensembl" id="ENSSSCT00060087118.1">
    <property type="protein sequence ID" value="ENSSSCP00060037692.1"/>
    <property type="gene ID" value="ENSSSCG00060063857.1"/>
</dbReference>
<dbReference type="Ensembl" id="ENSSSCT00065110114.1">
    <property type="protein sequence ID" value="ENSSSCP00065049575.1"/>
    <property type="gene ID" value="ENSSSCG00065079211.1"/>
</dbReference>
<dbReference type="Ensembl" id="ENSSSCT00070007703.1">
    <property type="protein sequence ID" value="ENSSSCP00070006327.1"/>
    <property type="gene ID" value="ENSSSCG00070004101.1"/>
</dbReference>
<dbReference type="Ensembl" id="ENSSSCT00085032275">
    <property type="protein sequence ID" value="ENSSSCP00085022381"/>
    <property type="gene ID" value="ENSSSCG00085016947"/>
</dbReference>
<dbReference type="Ensembl" id="ENSSSCT00090035397">
    <property type="protein sequence ID" value="ENSSSCP00090022143"/>
    <property type="gene ID" value="ENSSSCG00090019941"/>
</dbReference>
<dbReference type="Ensembl" id="ENSSSCT00105003174">
    <property type="protein sequence ID" value="ENSSSCP00105002409"/>
    <property type="gene ID" value="ENSSSCG00105001626"/>
</dbReference>
<dbReference type="Ensembl" id="ENSSSCT00110054139">
    <property type="protein sequence ID" value="ENSSSCP00110037724"/>
    <property type="gene ID" value="ENSSSCG00110028252"/>
</dbReference>
<dbReference type="Ensembl" id="ENSSSCT00115026120">
    <property type="protein sequence ID" value="ENSSSCP00115024745"/>
    <property type="gene ID" value="ENSSSCG00115015032"/>
</dbReference>
<dbReference type="Ensembl" id="ENSSSCT00130027157">
    <property type="protein sequence ID" value="ENSSSCP00130018459"/>
    <property type="gene ID" value="ENSSSCG00130013711"/>
</dbReference>
<dbReference type="GeneID" id="100127484"/>
<dbReference type="KEGG" id="ssc:100127484"/>
<dbReference type="CTD" id="4342"/>
<dbReference type="VGNC" id="VGNC:90312">
    <property type="gene designation" value="MOS"/>
</dbReference>
<dbReference type="eggNOG" id="KOG0192">
    <property type="taxonomic scope" value="Eukaryota"/>
</dbReference>
<dbReference type="GeneTree" id="ENSGT00940000160233"/>
<dbReference type="HOGENOM" id="CLU_000288_7_35_1"/>
<dbReference type="InParanoid" id="P50118"/>
<dbReference type="OMA" id="LSWCSID"/>
<dbReference type="OrthoDB" id="4062651at2759"/>
<dbReference type="TreeFam" id="TF331103"/>
<dbReference type="BRENDA" id="2.7.10.2">
    <property type="organism ID" value="6170"/>
</dbReference>
<dbReference type="Proteomes" id="UP000008227">
    <property type="component" value="Chromosome 4"/>
</dbReference>
<dbReference type="Proteomes" id="UP000314985">
    <property type="component" value="Chromosome 4"/>
</dbReference>
<dbReference type="Proteomes" id="UP000694570">
    <property type="component" value="Unplaced"/>
</dbReference>
<dbReference type="Proteomes" id="UP000694571">
    <property type="component" value="Unplaced"/>
</dbReference>
<dbReference type="Proteomes" id="UP000694720">
    <property type="component" value="Unplaced"/>
</dbReference>
<dbReference type="Proteomes" id="UP000694722">
    <property type="component" value="Unplaced"/>
</dbReference>
<dbReference type="Proteomes" id="UP000694723">
    <property type="component" value="Unplaced"/>
</dbReference>
<dbReference type="Proteomes" id="UP000694724">
    <property type="component" value="Unplaced"/>
</dbReference>
<dbReference type="Proteomes" id="UP000694725">
    <property type="component" value="Unplaced"/>
</dbReference>
<dbReference type="Proteomes" id="UP000694726">
    <property type="component" value="Unplaced"/>
</dbReference>
<dbReference type="Proteomes" id="UP000694727">
    <property type="component" value="Unplaced"/>
</dbReference>
<dbReference type="Proteomes" id="UP000694728">
    <property type="component" value="Unplaced"/>
</dbReference>
<dbReference type="Bgee" id="ENSSSCG00000006248">
    <property type="expression patterns" value="Expressed in oocyte and 4 other cell types or tissues"/>
</dbReference>
<dbReference type="GO" id="GO:0005737">
    <property type="term" value="C:cytoplasm"/>
    <property type="evidence" value="ECO:0000318"/>
    <property type="project" value="GO_Central"/>
</dbReference>
<dbReference type="GO" id="GO:0005524">
    <property type="term" value="F:ATP binding"/>
    <property type="evidence" value="ECO:0007669"/>
    <property type="project" value="UniProtKB-KW"/>
</dbReference>
<dbReference type="GO" id="GO:0004709">
    <property type="term" value="F:MAP kinase kinase kinase activity"/>
    <property type="evidence" value="ECO:0000250"/>
    <property type="project" value="UniProtKB"/>
</dbReference>
<dbReference type="GO" id="GO:0004672">
    <property type="term" value="F:protein kinase activity"/>
    <property type="evidence" value="ECO:0000318"/>
    <property type="project" value="GO_Central"/>
</dbReference>
<dbReference type="GO" id="GO:0106310">
    <property type="term" value="F:protein serine kinase activity"/>
    <property type="evidence" value="ECO:0007669"/>
    <property type="project" value="RHEA"/>
</dbReference>
<dbReference type="GO" id="GO:0004674">
    <property type="term" value="F:protein serine/threonine kinase activity"/>
    <property type="evidence" value="ECO:0000250"/>
    <property type="project" value="UniProtKB"/>
</dbReference>
<dbReference type="GO" id="GO:0006325">
    <property type="term" value="P:chromatin organization"/>
    <property type="evidence" value="ECO:0000250"/>
    <property type="project" value="UniProtKB"/>
</dbReference>
<dbReference type="GO" id="GO:0070371">
    <property type="term" value="P:ERK1 and ERK2 cascade"/>
    <property type="evidence" value="ECO:0000315"/>
    <property type="project" value="AgBase"/>
</dbReference>
<dbReference type="GO" id="GO:0051296">
    <property type="term" value="P:establishment of meiotic spindle orientation"/>
    <property type="evidence" value="ECO:0000250"/>
    <property type="project" value="UniProtKB"/>
</dbReference>
<dbReference type="GO" id="GO:0000165">
    <property type="term" value="P:MAPK cascade"/>
    <property type="evidence" value="ECO:0000315"/>
    <property type="project" value="AgBase"/>
</dbReference>
<dbReference type="GO" id="GO:0000212">
    <property type="term" value="P:meiotic spindle organization"/>
    <property type="evidence" value="ECO:0000250"/>
    <property type="project" value="UniProtKB"/>
</dbReference>
<dbReference type="GO" id="GO:1902103">
    <property type="term" value="P:negative regulation of metaphase/anaphase transition of meiotic cell cycle"/>
    <property type="evidence" value="ECO:0000315"/>
    <property type="project" value="AgBase"/>
</dbReference>
<dbReference type="GO" id="GO:0001556">
    <property type="term" value="P:oocyte maturation"/>
    <property type="evidence" value="ECO:0000250"/>
    <property type="project" value="UniProtKB"/>
</dbReference>
<dbReference type="GO" id="GO:0070374">
    <property type="term" value="P:positive regulation of ERK1 and ERK2 cascade"/>
    <property type="evidence" value="ECO:0000250"/>
    <property type="project" value="UniProtKB"/>
</dbReference>
<dbReference type="GO" id="GO:0043410">
    <property type="term" value="P:positive regulation of MAPK cascade"/>
    <property type="evidence" value="ECO:0000250"/>
    <property type="project" value="UniProtKB"/>
</dbReference>
<dbReference type="GO" id="GO:0040020">
    <property type="term" value="P:regulation of meiotic nuclear division"/>
    <property type="evidence" value="ECO:0007669"/>
    <property type="project" value="Ensembl"/>
</dbReference>
<dbReference type="GO" id="GO:0007165">
    <property type="term" value="P:signal transduction"/>
    <property type="evidence" value="ECO:0000318"/>
    <property type="project" value="GO_Central"/>
</dbReference>
<dbReference type="CDD" id="cd13979">
    <property type="entry name" value="STKc_Mos"/>
    <property type="match status" value="1"/>
</dbReference>
<dbReference type="FunFam" id="1.10.510.10:FF:000490">
    <property type="entry name" value="Proto-oncogene serine/threonine-protein kinase mos"/>
    <property type="match status" value="1"/>
</dbReference>
<dbReference type="FunFam" id="3.30.200.20:FF:000316">
    <property type="entry name" value="Proto-oncogene serine/threonine-protein kinase mos"/>
    <property type="match status" value="1"/>
</dbReference>
<dbReference type="Gene3D" id="3.30.200.20">
    <property type="entry name" value="Phosphorylase Kinase, domain 1"/>
    <property type="match status" value="1"/>
</dbReference>
<dbReference type="Gene3D" id="1.10.510.10">
    <property type="entry name" value="Transferase(Phosphotransferase) domain 1"/>
    <property type="match status" value="1"/>
</dbReference>
<dbReference type="InterPro" id="IPR011009">
    <property type="entry name" value="Kinase-like_dom_sf"/>
</dbReference>
<dbReference type="InterPro" id="IPR000719">
    <property type="entry name" value="Prot_kinase_dom"/>
</dbReference>
<dbReference type="InterPro" id="IPR017441">
    <property type="entry name" value="Protein_kinase_ATP_BS"/>
</dbReference>
<dbReference type="InterPro" id="IPR008271">
    <property type="entry name" value="Ser/Thr_kinase_AS"/>
</dbReference>
<dbReference type="InterPro" id="IPR051681">
    <property type="entry name" value="Ser/Thr_Kinases-Pseudokinases"/>
</dbReference>
<dbReference type="PANTHER" id="PTHR44329">
    <property type="entry name" value="SERINE/THREONINE-PROTEIN KINASE TNNI3K-RELATED"/>
    <property type="match status" value="1"/>
</dbReference>
<dbReference type="PANTHER" id="PTHR44329:SF285">
    <property type="entry name" value="V-MOS MOLONEY MURINE SARCOMA VIRAL ONCO HOMOLOG"/>
    <property type="match status" value="1"/>
</dbReference>
<dbReference type="Pfam" id="PF00069">
    <property type="entry name" value="Pkinase"/>
    <property type="match status" value="1"/>
</dbReference>
<dbReference type="PIRSF" id="PIRSF000654">
    <property type="entry name" value="Integrin-linked_kinase"/>
    <property type="match status" value="1"/>
</dbReference>
<dbReference type="SMART" id="SM00220">
    <property type="entry name" value="S_TKc"/>
    <property type="match status" value="1"/>
</dbReference>
<dbReference type="SUPFAM" id="SSF56112">
    <property type="entry name" value="Protein kinase-like (PK-like)"/>
    <property type="match status" value="1"/>
</dbReference>
<dbReference type="PROSITE" id="PS00107">
    <property type="entry name" value="PROTEIN_KINASE_ATP"/>
    <property type="match status" value="1"/>
</dbReference>
<dbReference type="PROSITE" id="PS50011">
    <property type="entry name" value="PROTEIN_KINASE_DOM"/>
    <property type="match status" value="1"/>
</dbReference>
<dbReference type="PROSITE" id="PS00108">
    <property type="entry name" value="PROTEIN_KINASE_ST"/>
    <property type="match status" value="1"/>
</dbReference>
<sequence length="345" mass="37941">MPSPFPRRRCLPGDFSPSVDSRPCSSPCELPGPTGKLFLGGTPPRALRLPRRLAWCSIDWEQVCLLQRLGAGGFGSVYKATYHGVPVAIKQVSRCTKNRLASQRSFWAELNIARLRHANIVRVVAASTRTPAAFDSLGSIIMEFGGNVTLHQVIYGATGCPEEDGPPCSAGEQLNLEKCLKYSLDVVSGLLFLHSQGIVHLDLKPANILISEQDVCKISDFGCSERLEDLRFRPRHHLGGTYTHRAPELLKGEPVTPKADIYSFAITLWQMTTRQVPYSGERQHVLYAVVAYNLRPSLSAAVFTESVPGKKLEDIIQCGWTAPAQQRPSAQLLLLDLRALQAELG</sequence>
<name>MOS_PIG</name>
<feature type="chain" id="PRO_0000086346" description="Proto-oncogene serine/threonine-protein kinase mos">
    <location>
        <begin position="1"/>
        <end position="345"/>
    </location>
</feature>
<feature type="domain" description="Protein kinase" evidence="2">
    <location>
        <begin position="63"/>
        <end position="344"/>
    </location>
</feature>
<feature type="active site" description="Proton acceptor" evidence="2 3">
    <location>
        <position position="202"/>
    </location>
</feature>
<feature type="binding site" evidence="2">
    <location>
        <begin position="69"/>
        <end position="77"/>
    </location>
    <ligand>
        <name>ATP</name>
        <dbReference type="ChEBI" id="CHEBI:30616"/>
    </ligand>
</feature>
<feature type="binding site" evidence="2">
    <location>
        <position position="90"/>
    </location>
    <ligand>
        <name>ATP</name>
        <dbReference type="ChEBI" id="CHEBI:30616"/>
    </ligand>
</feature>
<reference key="1">
    <citation type="journal article" date="1996" name="Mol. Reprod. Dev.">
        <title>Transcription of c-mos protooncogene in the pig involves both tissue-specific promoters and alternative polyadenylation sites.</title>
        <authorList>
            <person name="Newman B."/>
            <person name="Dai Y."/>
        </authorList>
    </citation>
    <scope>NUCLEOTIDE SEQUENCE [GENOMIC DNA]</scope>
</reference>
<gene>
    <name evidence="1" type="primary">MOS</name>
</gene>
<accession>P50118</accession>
<proteinExistence type="evidence at transcript level"/>
<evidence type="ECO:0000250" key="1">
    <source>
        <dbReference type="UniProtKB" id="P00540"/>
    </source>
</evidence>
<evidence type="ECO:0000255" key="2">
    <source>
        <dbReference type="PROSITE-ProRule" id="PRU00159"/>
    </source>
</evidence>
<evidence type="ECO:0000255" key="3">
    <source>
        <dbReference type="PROSITE-ProRule" id="PRU10027"/>
    </source>
</evidence>
<evidence type="ECO:0000269" key="4">
    <source>
    </source>
</evidence>
<protein>
    <recommendedName>
        <fullName evidence="1">Proto-oncogene serine/threonine-protein kinase mos</fullName>
        <ecNumber>2.7.11.1</ecNumber>
    </recommendedName>
    <alternativeName>
        <fullName>Oocyte maturation factor mos</fullName>
    </alternativeName>
    <alternativeName>
        <fullName>Proto-oncogene c-Mos</fullName>
    </alternativeName>
</protein>
<keyword id="KW-0067">ATP-binding</keyword>
<keyword id="KW-0963">Cytoplasm</keyword>
<keyword id="KW-0418">Kinase</keyword>
<keyword id="KW-0547">Nucleotide-binding</keyword>
<keyword id="KW-0656">Proto-oncogene</keyword>
<keyword id="KW-1185">Reference proteome</keyword>
<keyword id="KW-0723">Serine/threonine-protein kinase</keyword>
<keyword id="KW-0808">Transferase</keyword>
<comment type="function">
    <text evidence="1">Serine/threonine kinase involved in the regulation of MAPK signaling. Is an activator of the ERK1/2 signaling cascade playing an essential role in the stimulation of oocyte maturation.</text>
</comment>
<comment type="catalytic activity">
    <reaction>
        <text>L-seryl-[protein] + ATP = O-phospho-L-seryl-[protein] + ADP + H(+)</text>
        <dbReference type="Rhea" id="RHEA:17989"/>
        <dbReference type="Rhea" id="RHEA-COMP:9863"/>
        <dbReference type="Rhea" id="RHEA-COMP:11604"/>
        <dbReference type="ChEBI" id="CHEBI:15378"/>
        <dbReference type="ChEBI" id="CHEBI:29999"/>
        <dbReference type="ChEBI" id="CHEBI:30616"/>
        <dbReference type="ChEBI" id="CHEBI:83421"/>
        <dbReference type="ChEBI" id="CHEBI:456216"/>
        <dbReference type="EC" id="2.7.11.1"/>
    </reaction>
</comment>
<comment type="catalytic activity">
    <reaction>
        <text>L-threonyl-[protein] + ATP = O-phospho-L-threonyl-[protein] + ADP + H(+)</text>
        <dbReference type="Rhea" id="RHEA:46608"/>
        <dbReference type="Rhea" id="RHEA-COMP:11060"/>
        <dbReference type="Rhea" id="RHEA-COMP:11605"/>
        <dbReference type="ChEBI" id="CHEBI:15378"/>
        <dbReference type="ChEBI" id="CHEBI:30013"/>
        <dbReference type="ChEBI" id="CHEBI:30616"/>
        <dbReference type="ChEBI" id="CHEBI:61977"/>
        <dbReference type="ChEBI" id="CHEBI:456216"/>
        <dbReference type="EC" id="2.7.11.1"/>
    </reaction>
</comment>
<comment type="subunit">
    <text evidence="1">Interacts with MAP2K1/MEK1.</text>
</comment>
<comment type="subcellular location">
    <subcellularLocation>
        <location evidence="1">Cytoplasm</location>
    </subcellularLocation>
</comment>
<comment type="tissue specificity">
    <text evidence="4">Restricted to gonadal tissues.</text>
</comment>
<comment type="similarity">
    <text evidence="2">Belongs to the protein kinase superfamily. Ser/Thr protein kinase family.</text>
</comment>